<evidence type="ECO:0000255" key="1">
    <source>
        <dbReference type="HAMAP-Rule" id="MF_00728"/>
    </source>
</evidence>
<feature type="chain" id="PRO_1000045890" description="Septation ring formation regulator EzrA">
    <location>
        <begin position="1"/>
        <end position="563"/>
    </location>
</feature>
<feature type="topological domain" description="Extracellular" evidence="1">
    <location>
        <begin position="1"/>
        <end position="2"/>
    </location>
</feature>
<feature type="transmembrane region" description="Helical" evidence="1">
    <location>
        <begin position="3"/>
        <end position="21"/>
    </location>
</feature>
<feature type="topological domain" description="Cytoplasmic" evidence="1">
    <location>
        <begin position="22"/>
        <end position="563"/>
    </location>
</feature>
<feature type="coiled-coil region" evidence="1">
    <location>
        <begin position="133"/>
        <end position="159"/>
    </location>
</feature>
<feature type="coiled-coil region" evidence="1">
    <location>
        <begin position="243"/>
        <end position="276"/>
    </location>
</feature>
<feature type="coiled-coil region" evidence="1">
    <location>
        <begin position="309"/>
        <end position="529"/>
    </location>
</feature>
<keyword id="KW-0131">Cell cycle</keyword>
<keyword id="KW-0132">Cell division</keyword>
<keyword id="KW-1003">Cell membrane</keyword>
<keyword id="KW-0175">Coiled coil</keyword>
<keyword id="KW-0472">Membrane</keyword>
<keyword id="KW-0717">Septation</keyword>
<keyword id="KW-0812">Transmembrane</keyword>
<keyword id="KW-1133">Transmembrane helix</keyword>
<name>EZRA_BACVZ</name>
<sequence length="563" mass="65384">MELVIGLLVILLALFAAGYFFRKKIYTEIDRLESWKIEILNRSIVEEMSKIKHLKMTGETEEFFERWREEWDEIVTAHLPKVEELLYDAEENADKYRFKKANQVLVHIDDLLTAAESNIEGILREISDLVTSEEKSRGEIEQVRERYSKARKNLLAYSHLYGELYNSLETDLDEIWSGIKEFEEETESGNYIKARKVLLEQDRRLDQLQTYIDDVPKLLADCKQTVPNQIAKLKDGYREMTEKGYKLEHIQIEKELDTLTNQVKRAENALLEELDVDEASAILQLIDETIQSMYEQLEGEVEAGQSVLSKMPELIIAYEKLEEEKDRTKTETELVKESYQLTAGEIGRQHAFEKQLETIGRLLEQAREKLDGEHVAYSLLIEEVEAIEKQLEEAQKEHAEYRENLQALRKEELQARETLMHLRKTISDTARMLQKSNVPGIPEQVKDKLETANHHIEETVSQLEELPLNMEEAAKHLDEAEKVVEEVSEEAEDLVIQVKLIERIIQYGNRFRSQNHILSEQLKEAERLFYAYSYNEAYEMAADAVEKAAPGAVKKIKADQSAS</sequence>
<comment type="function">
    <text evidence="1">Negative regulator of FtsZ ring formation; modulates the frequency and position of FtsZ ring formation. Inhibits FtsZ ring formation at polar sites. Interacts either with FtsZ or with one of its binding partners to promote depolymerization.</text>
</comment>
<comment type="subcellular location">
    <subcellularLocation>
        <location evidence="1">Cell membrane</location>
        <topology evidence="1">Single-pass membrane protein</topology>
    </subcellularLocation>
    <text evidence="1">Colocalized with FtsZ to the nascent septal site.</text>
</comment>
<comment type="similarity">
    <text evidence="1">Belongs to the EzrA family.</text>
</comment>
<proteinExistence type="inferred from homology"/>
<accession>A7Z7N6</accession>
<protein>
    <recommendedName>
        <fullName evidence="1">Septation ring formation regulator EzrA</fullName>
    </recommendedName>
</protein>
<reference key="1">
    <citation type="journal article" date="2007" name="Nat. Biotechnol.">
        <title>Comparative analysis of the complete genome sequence of the plant growth-promoting bacterium Bacillus amyloliquefaciens FZB42.</title>
        <authorList>
            <person name="Chen X.H."/>
            <person name="Koumoutsi A."/>
            <person name="Scholz R."/>
            <person name="Eisenreich A."/>
            <person name="Schneider K."/>
            <person name="Heinemeyer I."/>
            <person name="Morgenstern B."/>
            <person name="Voss B."/>
            <person name="Hess W.R."/>
            <person name="Reva O."/>
            <person name="Junge H."/>
            <person name="Voigt B."/>
            <person name="Jungblut P.R."/>
            <person name="Vater J."/>
            <person name="Suessmuth R."/>
            <person name="Liesegang H."/>
            <person name="Strittmatter A."/>
            <person name="Gottschalk G."/>
            <person name="Borriss R."/>
        </authorList>
    </citation>
    <scope>NUCLEOTIDE SEQUENCE [LARGE SCALE GENOMIC DNA]</scope>
    <source>
        <strain>DSM 23117 / BGSC 10A6 / LMG 26770 / FZB42</strain>
    </source>
</reference>
<organism>
    <name type="scientific">Bacillus velezensis (strain DSM 23117 / BGSC 10A6 / LMG 26770 / FZB42)</name>
    <name type="common">Bacillus amyloliquefaciens subsp. plantarum</name>
    <dbReference type="NCBI Taxonomy" id="326423"/>
    <lineage>
        <taxon>Bacteria</taxon>
        <taxon>Bacillati</taxon>
        <taxon>Bacillota</taxon>
        <taxon>Bacilli</taxon>
        <taxon>Bacillales</taxon>
        <taxon>Bacillaceae</taxon>
        <taxon>Bacillus</taxon>
        <taxon>Bacillus amyloliquefaciens group</taxon>
    </lineage>
</organism>
<gene>
    <name evidence="1" type="primary">ezrA</name>
    <name type="ordered locus">RBAM_026540</name>
</gene>
<dbReference type="EMBL" id="CP000560">
    <property type="protein sequence ID" value="ABS75012.1"/>
    <property type="molecule type" value="Genomic_DNA"/>
</dbReference>
<dbReference type="RefSeq" id="WP_012118185.1">
    <property type="nucleotide sequence ID" value="NC_009725.2"/>
</dbReference>
<dbReference type="SMR" id="A7Z7N6"/>
<dbReference type="GeneID" id="93081796"/>
<dbReference type="KEGG" id="bay:RBAM_026540"/>
<dbReference type="HOGENOM" id="CLU_034079_1_0_9"/>
<dbReference type="Proteomes" id="UP000001120">
    <property type="component" value="Chromosome"/>
</dbReference>
<dbReference type="GO" id="GO:0005886">
    <property type="term" value="C:plasma membrane"/>
    <property type="evidence" value="ECO:0007669"/>
    <property type="project" value="UniProtKB-SubCell"/>
</dbReference>
<dbReference type="GO" id="GO:0005940">
    <property type="term" value="C:septin ring"/>
    <property type="evidence" value="ECO:0007669"/>
    <property type="project" value="InterPro"/>
</dbReference>
<dbReference type="GO" id="GO:0000917">
    <property type="term" value="P:division septum assembly"/>
    <property type="evidence" value="ECO:0007669"/>
    <property type="project" value="UniProtKB-KW"/>
</dbReference>
<dbReference type="GO" id="GO:0000921">
    <property type="term" value="P:septin ring assembly"/>
    <property type="evidence" value="ECO:0007669"/>
    <property type="project" value="InterPro"/>
</dbReference>
<dbReference type="HAMAP" id="MF_00728">
    <property type="entry name" value="EzrA"/>
    <property type="match status" value="1"/>
</dbReference>
<dbReference type="InterPro" id="IPR010379">
    <property type="entry name" value="EzrA"/>
</dbReference>
<dbReference type="NCBIfam" id="NF003413">
    <property type="entry name" value="PRK04778.1-7"/>
    <property type="match status" value="1"/>
</dbReference>
<dbReference type="Pfam" id="PF06160">
    <property type="entry name" value="EzrA"/>
    <property type="match status" value="1"/>
</dbReference>